<dbReference type="EC" id="4.2.1.20" evidence="1"/>
<dbReference type="EMBL" id="CP001158">
    <property type="protein sequence ID" value="ACL30089.1"/>
    <property type="molecule type" value="Genomic_DNA"/>
</dbReference>
<dbReference type="RefSeq" id="WP_009874231.1">
    <property type="nucleotide sequence ID" value="NC_011834.1"/>
</dbReference>
<dbReference type="SMR" id="B8D7H4"/>
<dbReference type="KEGG" id="bau:BUAPTUC7_274"/>
<dbReference type="HOGENOM" id="CLU_016734_0_4_6"/>
<dbReference type="UniPathway" id="UPA00035">
    <property type="reaction ID" value="UER00044"/>
</dbReference>
<dbReference type="GO" id="GO:0005829">
    <property type="term" value="C:cytosol"/>
    <property type="evidence" value="ECO:0007669"/>
    <property type="project" value="TreeGrafter"/>
</dbReference>
<dbReference type="GO" id="GO:0004834">
    <property type="term" value="F:tryptophan synthase activity"/>
    <property type="evidence" value="ECO:0007669"/>
    <property type="project" value="UniProtKB-UniRule"/>
</dbReference>
<dbReference type="CDD" id="cd04724">
    <property type="entry name" value="Tryptophan_synthase_alpha"/>
    <property type="match status" value="1"/>
</dbReference>
<dbReference type="FunFam" id="3.20.20.70:FF:000037">
    <property type="entry name" value="Tryptophan synthase alpha chain"/>
    <property type="match status" value="1"/>
</dbReference>
<dbReference type="Gene3D" id="3.20.20.70">
    <property type="entry name" value="Aldolase class I"/>
    <property type="match status" value="1"/>
</dbReference>
<dbReference type="HAMAP" id="MF_00131">
    <property type="entry name" value="Trp_synth_alpha"/>
    <property type="match status" value="1"/>
</dbReference>
<dbReference type="InterPro" id="IPR013785">
    <property type="entry name" value="Aldolase_TIM"/>
</dbReference>
<dbReference type="InterPro" id="IPR011060">
    <property type="entry name" value="RibuloseP-bd_barrel"/>
</dbReference>
<dbReference type="InterPro" id="IPR018204">
    <property type="entry name" value="Trp_synthase_alpha_AS"/>
</dbReference>
<dbReference type="InterPro" id="IPR002028">
    <property type="entry name" value="Trp_synthase_suA"/>
</dbReference>
<dbReference type="NCBIfam" id="TIGR00262">
    <property type="entry name" value="trpA"/>
    <property type="match status" value="1"/>
</dbReference>
<dbReference type="PANTHER" id="PTHR43406:SF1">
    <property type="entry name" value="TRYPTOPHAN SYNTHASE ALPHA CHAIN, CHLOROPLASTIC"/>
    <property type="match status" value="1"/>
</dbReference>
<dbReference type="PANTHER" id="PTHR43406">
    <property type="entry name" value="TRYPTOPHAN SYNTHASE, ALPHA CHAIN"/>
    <property type="match status" value="1"/>
</dbReference>
<dbReference type="Pfam" id="PF00290">
    <property type="entry name" value="Trp_syntA"/>
    <property type="match status" value="1"/>
</dbReference>
<dbReference type="SUPFAM" id="SSF51366">
    <property type="entry name" value="Ribulose-phoshate binding barrel"/>
    <property type="match status" value="1"/>
</dbReference>
<dbReference type="PROSITE" id="PS00167">
    <property type="entry name" value="TRP_SYNTHASE_ALPHA"/>
    <property type="match status" value="1"/>
</dbReference>
<keyword id="KW-0028">Amino-acid biosynthesis</keyword>
<keyword id="KW-0057">Aromatic amino acid biosynthesis</keyword>
<keyword id="KW-0456">Lyase</keyword>
<keyword id="KW-0822">Tryptophan biosynthesis</keyword>
<evidence type="ECO:0000255" key="1">
    <source>
        <dbReference type="HAMAP-Rule" id="MF_00131"/>
    </source>
</evidence>
<sequence length="269" mass="30323">MNRYQETFKRLSCLKEGCFIPFVVLGDPSLETSIKIIETLIKSGADALEIGIPFSDPLADGPTVQKSNLRALSKNNTFFEYFKILKQLRKKNKKLPIGILIYANLVYNQGIDNFYFQCFNSGLDSVLIADVPIEESKIFYNIANKYKINPIFICPPDADADFLYKISLYAQGFIYVLSRPGVTGIKNNTIALPRDFINKIKKYNSVPLLQGFGISNPKQIKEAISSGLSGVICGSAIINIIEKYLNQEKKMIKEIKKFTHLLKLSTKLE</sequence>
<proteinExistence type="inferred from homology"/>
<gene>
    <name evidence="1" type="primary">trpA</name>
    <name type="ordered locus">BUAPTUC7_274</name>
</gene>
<reference key="1">
    <citation type="journal article" date="2009" name="Science">
        <title>The dynamics and time scale of ongoing genomic erosion in symbiotic bacteria.</title>
        <authorList>
            <person name="Moran N.A."/>
            <person name="McLaughlin H.J."/>
            <person name="Sorek R."/>
        </authorList>
    </citation>
    <scope>NUCLEOTIDE SEQUENCE [LARGE SCALE GENOMIC DNA]</scope>
    <source>
        <strain>Tuc7</strain>
    </source>
</reference>
<name>TRPA_BUCAT</name>
<comment type="function">
    <text evidence="1">The alpha subunit is responsible for the aldol cleavage of indoleglycerol phosphate to indole and glyceraldehyde 3-phosphate.</text>
</comment>
<comment type="catalytic activity">
    <reaction evidence="1">
        <text>(1S,2R)-1-C-(indol-3-yl)glycerol 3-phosphate + L-serine = D-glyceraldehyde 3-phosphate + L-tryptophan + H2O</text>
        <dbReference type="Rhea" id="RHEA:10532"/>
        <dbReference type="ChEBI" id="CHEBI:15377"/>
        <dbReference type="ChEBI" id="CHEBI:33384"/>
        <dbReference type="ChEBI" id="CHEBI:57912"/>
        <dbReference type="ChEBI" id="CHEBI:58866"/>
        <dbReference type="ChEBI" id="CHEBI:59776"/>
        <dbReference type="EC" id="4.2.1.20"/>
    </reaction>
</comment>
<comment type="pathway">
    <text evidence="1">Amino-acid biosynthesis; L-tryptophan biosynthesis; L-tryptophan from chorismate: step 5/5.</text>
</comment>
<comment type="subunit">
    <text evidence="1">Tetramer of two alpha and two beta chains.</text>
</comment>
<comment type="similarity">
    <text evidence="1">Belongs to the TrpA family.</text>
</comment>
<protein>
    <recommendedName>
        <fullName evidence="1">Tryptophan synthase alpha chain</fullName>
        <ecNumber evidence="1">4.2.1.20</ecNumber>
    </recommendedName>
</protein>
<feature type="chain" id="PRO_1000198703" description="Tryptophan synthase alpha chain">
    <location>
        <begin position="1"/>
        <end position="269"/>
    </location>
</feature>
<feature type="active site" description="Proton acceptor" evidence="1">
    <location>
        <position position="49"/>
    </location>
</feature>
<feature type="active site" description="Proton acceptor" evidence="1">
    <location>
        <position position="60"/>
    </location>
</feature>
<accession>B8D7H4</accession>
<organism>
    <name type="scientific">Buchnera aphidicola subsp. Acyrthosiphon pisum (strain Tuc7)</name>
    <dbReference type="NCBI Taxonomy" id="561501"/>
    <lineage>
        <taxon>Bacteria</taxon>
        <taxon>Pseudomonadati</taxon>
        <taxon>Pseudomonadota</taxon>
        <taxon>Gammaproteobacteria</taxon>
        <taxon>Enterobacterales</taxon>
        <taxon>Erwiniaceae</taxon>
        <taxon>Buchnera</taxon>
    </lineage>
</organism>